<gene>
    <name evidence="1" type="primary">psd</name>
    <name type="ordered locus">MS1864</name>
</gene>
<proteinExistence type="inferred from homology"/>
<comment type="function">
    <text evidence="1">Catalyzes the formation of phosphatidylethanolamine (PtdEtn) from phosphatidylserine (PtdSer).</text>
</comment>
<comment type="catalytic activity">
    <reaction evidence="1">
        <text>a 1,2-diacyl-sn-glycero-3-phospho-L-serine + H(+) = a 1,2-diacyl-sn-glycero-3-phosphoethanolamine + CO2</text>
        <dbReference type="Rhea" id="RHEA:20828"/>
        <dbReference type="ChEBI" id="CHEBI:15378"/>
        <dbReference type="ChEBI" id="CHEBI:16526"/>
        <dbReference type="ChEBI" id="CHEBI:57262"/>
        <dbReference type="ChEBI" id="CHEBI:64612"/>
        <dbReference type="EC" id="4.1.1.65"/>
    </reaction>
</comment>
<comment type="cofactor">
    <cofactor evidence="1">
        <name>pyruvate</name>
        <dbReference type="ChEBI" id="CHEBI:15361"/>
    </cofactor>
    <text evidence="1">Binds 1 pyruvoyl group covalently per subunit.</text>
</comment>
<comment type="pathway">
    <text evidence="1">Phospholipid metabolism; phosphatidylethanolamine biosynthesis; phosphatidylethanolamine from CDP-diacylglycerol: step 2/2.</text>
</comment>
<comment type="subunit">
    <text evidence="1">Heterodimer of a large membrane-associated beta subunit and a small pyruvoyl-containing alpha subunit.</text>
</comment>
<comment type="subcellular location">
    <subcellularLocation>
        <location evidence="1">Cell membrane</location>
        <topology evidence="1">Peripheral membrane protein</topology>
    </subcellularLocation>
</comment>
<comment type="PTM">
    <text evidence="1">Is synthesized initially as an inactive proenzyme. Formation of the active enzyme involves a self-maturation process in which the active site pyruvoyl group is generated from an internal serine residue via an autocatalytic post-translational modification. Two non-identical subunits are generated from the proenzyme in this reaction, and the pyruvate is formed at the N-terminus of the alpha chain, which is derived from the carboxyl end of the proenzyme. The autoendoproteolytic cleavage occurs by a canonical serine protease mechanism, in which the side chain hydroxyl group of the serine supplies its oxygen atom to form the C-terminus of the beta chain, while the remainder of the serine residue undergoes an oxidative deamination to produce ammonia and the pyruvoyl prosthetic group on the alpha chain. During this reaction, the Ser that is part of the protease active site of the proenzyme becomes the pyruvoyl prosthetic group, which constitutes an essential element of the active site of the mature decarboxylase.</text>
</comment>
<comment type="similarity">
    <text evidence="1">Belongs to the phosphatidylserine decarboxylase family. PSD-B subfamily. Prokaryotic type I sub-subfamily.</text>
</comment>
<comment type="sequence caution" evidence="2">
    <conflict type="erroneous initiation">
        <sequence resource="EMBL-CDS" id="AAU38471"/>
    </conflict>
</comment>
<organism>
    <name type="scientific">Mannheimia succiniciproducens (strain KCTC 0769BP / MBEL55E)</name>
    <dbReference type="NCBI Taxonomy" id="221988"/>
    <lineage>
        <taxon>Bacteria</taxon>
        <taxon>Pseudomonadati</taxon>
        <taxon>Pseudomonadota</taxon>
        <taxon>Gammaproteobacteria</taxon>
        <taxon>Pasteurellales</taxon>
        <taxon>Pasteurellaceae</taxon>
        <taxon>Basfia</taxon>
    </lineage>
</organism>
<keyword id="KW-1003">Cell membrane</keyword>
<keyword id="KW-0210">Decarboxylase</keyword>
<keyword id="KW-0444">Lipid biosynthesis</keyword>
<keyword id="KW-0443">Lipid metabolism</keyword>
<keyword id="KW-0456">Lyase</keyword>
<keyword id="KW-0472">Membrane</keyword>
<keyword id="KW-0594">Phospholipid biosynthesis</keyword>
<keyword id="KW-1208">Phospholipid metabolism</keyword>
<keyword id="KW-0670">Pyruvate</keyword>
<keyword id="KW-0865">Zymogen</keyword>
<protein>
    <recommendedName>
        <fullName evidence="1">Phosphatidylserine decarboxylase proenzyme</fullName>
        <ecNumber evidence="1">4.1.1.65</ecNumber>
    </recommendedName>
    <component>
        <recommendedName>
            <fullName evidence="1">Phosphatidylserine decarboxylase alpha chain</fullName>
        </recommendedName>
    </component>
    <component>
        <recommendedName>
            <fullName evidence="1">Phosphatidylserine decarboxylase beta chain</fullName>
        </recommendedName>
    </component>
</protein>
<accession>Q65RD9</accession>
<dbReference type="EC" id="4.1.1.65" evidence="1"/>
<dbReference type="EMBL" id="AE016827">
    <property type="protein sequence ID" value="AAU38471.1"/>
    <property type="status" value="ALT_INIT"/>
    <property type="molecule type" value="Genomic_DNA"/>
</dbReference>
<dbReference type="RefSeq" id="WP_041640234.1">
    <property type="nucleotide sequence ID" value="NC_006300.1"/>
</dbReference>
<dbReference type="SMR" id="Q65RD9"/>
<dbReference type="STRING" id="221988.MS1864"/>
<dbReference type="KEGG" id="msu:MS1864"/>
<dbReference type="eggNOG" id="COG0688">
    <property type="taxonomic scope" value="Bacteria"/>
</dbReference>
<dbReference type="HOGENOM" id="CLU_029061_4_1_6"/>
<dbReference type="OrthoDB" id="9802030at2"/>
<dbReference type="UniPathway" id="UPA00558">
    <property type="reaction ID" value="UER00616"/>
</dbReference>
<dbReference type="Proteomes" id="UP000000607">
    <property type="component" value="Chromosome"/>
</dbReference>
<dbReference type="GO" id="GO:0005886">
    <property type="term" value="C:plasma membrane"/>
    <property type="evidence" value="ECO:0007669"/>
    <property type="project" value="UniProtKB-SubCell"/>
</dbReference>
<dbReference type="GO" id="GO:0004609">
    <property type="term" value="F:phosphatidylserine decarboxylase activity"/>
    <property type="evidence" value="ECO:0007669"/>
    <property type="project" value="UniProtKB-UniRule"/>
</dbReference>
<dbReference type="GO" id="GO:0006646">
    <property type="term" value="P:phosphatidylethanolamine biosynthetic process"/>
    <property type="evidence" value="ECO:0007669"/>
    <property type="project" value="UniProtKB-UniRule"/>
</dbReference>
<dbReference type="HAMAP" id="MF_00662">
    <property type="entry name" value="PS_decarb_PSD_B_type1"/>
    <property type="match status" value="1"/>
</dbReference>
<dbReference type="InterPro" id="IPR003817">
    <property type="entry name" value="PS_Dcarbxylase"/>
</dbReference>
<dbReference type="InterPro" id="IPR033177">
    <property type="entry name" value="PSD-B"/>
</dbReference>
<dbReference type="InterPro" id="IPR033178">
    <property type="entry name" value="PSD_type1_pro"/>
</dbReference>
<dbReference type="NCBIfam" id="TIGR00163">
    <property type="entry name" value="PS_decarb"/>
    <property type="match status" value="1"/>
</dbReference>
<dbReference type="PANTHER" id="PTHR10067">
    <property type="entry name" value="PHOSPHATIDYLSERINE DECARBOXYLASE"/>
    <property type="match status" value="1"/>
</dbReference>
<dbReference type="PANTHER" id="PTHR10067:SF6">
    <property type="entry name" value="PHOSPHATIDYLSERINE DECARBOXYLASE PROENZYME, MITOCHONDRIAL"/>
    <property type="match status" value="1"/>
</dbReference>
<dbReference type="Pfam" id="PF02666">
    <property type="entry name" value="PS_Dcarbxylase"/>
    <property type="match status" value="1"/>
</dbReference>
<feature type="chain" id="PRO_0000029677" description="Phosphatidylserine decarboxylase beta chain" evidence="1">
    <location>
        <begin position="1"/>
        <end position="260"/>
    </location>
</feature>
<feature type="chain" id="PRO_0000029678" description="Phosphatidylserine decarboxylase alpha chain" evidence="1">
    <location>
        <begin position="261"/>
        <end position="294"/>
    </location>
</feature>
<feature type="active site" description="Charge relay system; for autoendoproteolytic cleavage activity" evidence="1">
    <location>
        <position position="100"/>
    </location>
</feature>
<feature type="active site" description="Charge relay system; for autoendoproteolytic cleavage activity" evidence="1">
    <location>
        <position position="157"/>
    </location>
</feature>
<feature type="active site" description="Charge relay system; for autoendoproteolytic cleavage activity" evidence="1">
    <location>
        <position position="261"/>
    </location>
</feature>
<feature type="active site" description="Schiff-base intermediate with substrate; via pyruvic acid; for decarboxylase activity" evidence="1">
    <location>
        <position position="261"/>
    </location>
</feature>
<feature type="site" description="Cleavage (non-hydrolytic); by autocatalysis" evidence="1">
    <location>
        <begin position="260"/>
        <end position="261"/>
    </location>
</feature>
<feature type="modified residue" description="Pyruvic acid (Ser); by autocatalysis" evidence="1">
    <location>
        <position position="261"/>
    </location>
</feature>
<evidence type="ECO:0000255" key="1">
    <source>
        <dbReference type="HAMAP-Rule" id="MF_00662"/>
    </source>
</evidence>
<evidence type="ECO:0000305" key="2"/>
<name>PSD_MANSM</name>
<reference key="1">
    <citation type="journal article" date="2004" name="Nat. Biotechnol.">
        <title>The genome sequence of the capnophilic rumen bacterium Mannheimia succiniciproducens.</title>
        <authorList>
            <person name="Hong S.H."/>
            <person name="Kim J.S."/>
            <person name="Lee S.Y."/>
            <person name="In Y.H."/>
            <person name="Choi S.S."/>
            <person name="Rih J.-K."/>
            <person name="Kim C.H."/>
            <person name="Jeong H."/>
            <person name="Hur C.G."/>
            <person name="Kim J.J."/>
        </authorList>
    </citation>
    <scope>NUCLEOTIDE SEQUENCE [LARGE SCALE GENOMIC DNA]</scope>
    <source>
        <strain>KCTC 0769BP / MBEL55E</strain>
    </source>
</reference>
<sequence>MNSLEKKQITYGQRLKIAFQYAMPQIYLTQIAGWFANKRWGAVTHFVIKMFAKKYNVHMAEAAKPNFSDYATFNEFFIRQLKEYARPINQNTDALCLPADGKISQCGHIDDELLLQAKGHSFSLRDLLAGDEELTRLFKDGEFVTTYLSPRDYHRVHMPCNGTIRKMIYVPGELFSVNPFLNTHIPNLLARNERVICLFDTDFGPMVQILVGATITASISTVWEGVINPPRTGDIRTWTYEGQSAVSLAKGQEMGAFQLGSTVINLFPKNAVKLADYLQVDTVTRVGEILAYKK</sequence>